<sequence length="394" mass="42299">MNKKSIRDVDLKGKRVFCRVDFNVPMKEGKITDETRIRAALPTIQYLVEQGAKVILASHLGRPKGQVVEELRLTPVAARLGELLGKDVKKADEAFGPVAQEMVAAMNEGDVLVLENVRFYAGEEKNDAELAKEFAALADIFVNDAFGAAHRAHASTAGIADYLPAVSGLLMEKELDVLGKALSNPDRPFTAIIGGAKVKDKIGVIRHLLDKVDNLIIGGGLAYTFVKALGHEIGLSLCEDDKIELAKEFMQLAKEKGVNFYMPVDVVITEEFSETATTKIVGIDSIPSNWEGVDIGPKTREIYADVIKNSKLVVWNGPMGVFEMTPFSQGTKAVGQALADAEGTYSVIGGGDSAAAVEKFGMADKMSHISTGGGASLEFMEGKELPGVVCLNDK</sequence>
<feature type="chain" id="PRO_1000192801" description="Phosphoglycerate kinase">
    <location>
        <begin position="1"/>
        <end position="394"/>
    </location>
</feature>
<feature type="binding site" evidence="1">
    <location>
        <begin position="21"/>
        <end position="23"/>
    </location>
    <ligand>
        <name>substrate</name>
    </ligand>
</feature>
<feature type="binding site" evidence="1">
    <location>
        <position position="36"/>
    </location>
    <ligand>
        <name>substrate</name>
    </ligand>
</feature>
<feature type="binding site" evidence="1">
    <location>
        <begin position="59"/>
        <end position="62"/>
    </location>
    <ligand>
        <name>substrate</name>
    </ligand>
</feature>
<feature type="binding site" evidence="1">
    <location>
        <position position="118"/>
    </location>
    <ligand>
        <name>substrate</name>
    </ligand>
</feature>
<feature type="binding site" evidence="1">
    <location>
        <position position="151"/>
    </location>
    <ligand>
        <name>substrate</name>
    </ligand>
</feature>
<feature type="binding site" evidence="1">
    <location>
        <position position="201"/>
    </location>
    <ligand>
        <name>ATP</name>
        <dbReference type="ChEBI" id="CHEBI:30616"/>
    </ligand>
</feature>
<feature type="binding site" evidence="1">
    <location>
        <position position="292"/>
    </location>
    <ligand>
        <name>ATP</name>
        <dbReference type="ChEBI" id="CHEBI:30616"/>
    </ligand>
</feature>
<feature type="binding site" evidence="1">
    <location>
        <position position="323"/>
    </location>
    <ligand>
        <name>ATP</name>
        <dbReference type="ChEBI" id="CHEBI:30616"/>
    </ligand>
</feature>
<feature type="binding site" evidence="1">
    <location>
        <begin position="350"/>
        <end position="353"/>
    </location>
    <ligand>
        <name>ATP</name>
        <dbReference type="ChEBI" id="CHEBI:30616"/>
    </ligand>
</feature>
<feature type="modified residue" description="Phosphoserine" evidence="1">
    <location>
        <position position="183"/>
    </location>
</feature>
<feature type="modified residue" description="Phosphothreonine" evidence="1">
    <location>
        <position position="299"/>
    </location>
</feature>
<reference key="1">
    <citation type="journal article" date="2009" name="J. Bacteriol.">
        <title>Complete genome sequence of the extremophilic Bacillus cereus strain Q1 with industrial applications.</title>
        <authorList>
            <person name="Xiong Z."/>
            <person name="Jiang Y."/>
            <person name="Qi D."/>
            <person name="Lu H."/>
            <person name="Yang F."/>
            <person name="Yang J."/>
            <person name="Chen L."/>
            <person name="Sun L."/>
            <person name="Xu X."/>
            <person name="Xue Y."/>
            <person name="Zhu Y."/>
            <person name="Jin Q."/>
        </authorList>
    </citation>
    <scope>NUCLEOTIDE SEQUENCE [LARGE SCALE GENOMIC DNA]</scope>
    <source>
        <strain>Q1</strain>
    </source>
</reference>
<evidence type="ECO:0000255" key="1">
    <source>
        <dbReference type="HAMAP-Rule" id="MF_00145"/>
    </source>
</evidence>
<gene>
    <name evidence="1" type="primary">pgk</name>
    <name type="ordered locus">BCQ_4943</name>
</gene>
<accession>B9J4M7</accession>
<dbReference type="EC" id="2.7.2.3" evidence="1"/>
<dbReference type="EMBL" id="CP000227">
    <property type="protein sequence ID" value="ACM15344.1"/>
    <property type="molecule type" value="Genomic_DNA"/>
</dbReference>
<dbReference type="KEGG" id="bcq:BCQ_4943"/>
<dbReference type="HOGENOM" id="CLU_025427_0_2_9"/>
<dbReference type="UniPathway" id="UPA00109">
    <property type="reaction ID" value="UER00185"/>
</dbReference>
<dbReference type="Proteomes" id="UP000000441">
    <property type="component" value="Chromosome"/>
</dbReference>
<dbReference type="GO" id="GO:0005829">
    <property type="term" value="C:cytosol"/>
    <property type="evidence" value="ECO:0007669"/>
    <property type="project" value="TreeGrafter"/>
</dbReference>
<dbReference type="GO" id="GO:0043531">
    <property type="term" value="F:ADP binding"/>
    <property type="evidence" value="ECO:0007669"/>
    <property type="project" value="TreeGrafter"/>
</dbReference>
<dbReference type="GO" id="GO:0005524">
    <property type="term" value="F:ATP binding"/>
    <property type="evidence" value="ECO:0007669"/>
    <property type="project" value="UniProtKB-KW"/>
</dbReference>
<dbReference type="GO" id="GO:0004618">
    <property type="term" value="F:phosphoglycerate kinase activity"/>
    <property type="evidence" value="ECO:0007669"/>
    <property type="project" value="UniProtKB-UniRule"/>
</dbReference>
<dbReference type="GO" id="GO:0006094">
    <property type="term" value="P:gluconeogenesis"/>
    <property type="evidence" value="ECO:0007669"/>
    <property type="project" value="TreeGrafter"/>
</dbReference>
<dbReference type="GO" id="GO:0006096">
    <property type="term" value="P:glycolytic process"/>
    <property type="evidence" value="ECO:0007669"/>
    <property type="project" value="UniProtKB-UniRule"/>
</dbReference>
<dbReference type="CDD" id="cd00318">
    <property type="entry name" value="Phosphoglycerate_kinase"/>
    <property type="match status" value="1"/>
</dbReference>
<dbReference type="FunFam" id="3.40.50.1260:FF:000001">
    <property type="entry name" value="Phosphoglycerate kinase"/>
    <property type="match status" value="1"/>
</dbReference>
<dbReference type="FunFam" id="3.40.50.1260:FF:000002">
    <property type="entry name" value="Phosphoglycerate kinase"/>
    <property type="match status" value="1"/>
</dbReference>
<dbReference type="Gene3D" id="3.40.50.1260">
    <property type="entry name" value="Phosphoglycerate kinase, N-terminal domain"/>
    <property type="match status" value="2"/>
</dbReference>
<dbReference type="HAMAP" id="MF_00145">
    <property type="entry name" value="Phosphoglyc_kinase"/>
    <property type="match status" value="1"/>
</dbReference>
<dbReference type="InterPro" id="IPR001576">
    <property type="entry name" value="Phosphoglycerate_kinase"/>
</dbReference>
<dbReference type="InterPro" id="IPR015911">
    <property type="entry name" value="Phosphoglycerate_kinase_CS"/>
</dbReference>
<dbReference type="InterPro" id="IPR015824">
    <property type="entry name" value="Phosphoglycerate_kinase_N"/>
</dbReference>
<dbReference type="InterPro" id="IPR036043">
    <property type="entry name" value="Phosphoglycerate_kinase_sf"/>
</dbReference>
<dbReference type="PANTHER" id="PTHR11406">
    <property type="entry name" value="PHOSPHOGLYCERATE KINASE"/>
    <property type="match status" value="1"/>
</dbReference>
<dbReference type="PANTHER" id="PTHR11406:SF23">
    <property type="entry name" value="PHOSPHOGLYCERATE KINASE 1, CHLOROPLASTIC-RELATED"/>
    <property type="match status" value="1"/>
</dbReference>
<dbReference type="Pfam" id="PF00162">
    <property type="entry name" value="PGK"/>
    <property type="match status" value="1"/>
</dbReference>
<dbReference type="PIRSF" id="PIRSF000724">
    <property type="entry name" value="Pgk"/>
    <property type="match status" value="1"/>
</dbReference>
<dbReference type="PRINTS" id="PR00477">
    <property type="entry name" value="PHGLYCKINASE"/>
</dbReference>
<dbReference type="SUPFAM" id="SSF53748">
    <property type="entry name" value="Phosphoglycerate kinase"/>
    <property type="match status" value="1"/>
</dbReference>
<dbReference type="PROSITE" id="PS00111">
    <property type="entry name" value="PGLYCERATE_KINASE"/>
    <property type="match status" value="1"/>
</dbReference>
<name>PGK_BACCQ</name>
<organism>
    <name type="scientific">Bacillus cereus (strain Q1)</name>
    <dbReference type="NCBI Taxonomy" id="361100"/>
    <lineage>
        <taxon>Bacteria</taxon>
        <taxon>Bacillati</taxon>
        <taxon>Bacillota</taxon>
        <taxon>Bacilli</taxon>
        <taxon>Bacillales</taxon>
        <taxon>Bacillaceae</taxon>
        <taxon>Bacillus</taxon>
        <taxon>Bacillus cereus group</taxon>
    </lineage>
</organism>
<keyword id="KW-0067">ATP-binding</keyword>
<keyword id="KW-0963">Cytoplasm</keyword>
<keyword id="KW-0324">Glycolysis</keyword>
<keyword id="KW-0418">Kinase</keyword>
<keyword id="KW-0547">Nucleotide-binding</keyword>
<keyword id="KW-0597">Phosphoprotein</keyword>
<keyword id="KW-0808">Transferase</keyword>
<proteinExistence type="inferred from homology"/>
<comment type="catalytic activity">
    <reaction evidence="1">
        <text>(2R)-3-phosphoglycerate + ATP = (2R)-3-phospho-glyceroyl phosphate + ADP</text>
        <dbReference type="Rhea" id="RHEA:14801"/>
        <dbReference type="ChEBI" id="CHEBI:30616"/>
        <dbReference type="ChEBI" id="CHEBI:57604"/>
        <dbReference type="ChEBI" id="CHEBI:58272"/>
        <dbReference type="ChEBI" id="CHEBI:456216"/>
        <dbReference type="EC" id="2.7.2.3"/>
    </reaction>
</comment>
<comment type="pathway">
    <text evidence="1">Carbohydrate degradation; glycolysis; pyruvate from D-glyceraldehyde 3-phosphate: step 2/5.</text>
</comment>
<comment type="subunit">
    <text evidence="1">Monomer.</text>
</comment>
<comment type="subcellular location">
    <subcellularLocation>
        <location evidence="1">Cytoplasm</location>
    </subcellularLocation>
</comment>
<comment type="similarity">
    <text evidence="1">Belongs to the phosphoglycerate kinase family.</text>
</comment>
<protein>
    <recommendedName>
        <fullName evidence="1">Phosphoglycerate kinase</fullName>
        <ecNumber evidence="1">2.7.2.3</ecNumber>
    </recommendedName>
</protein>